<dbReference type="EMBL" id="CP000360">
    <property type="protein sequence ID" value="ABF43680.1"/>
    <property type="molecule type" value="Genomic_DNA"/>
</dbReference>
<dbReference type="RefSeq" id="WP_011525477.1">
    <property type="nucleotide sequence ID" value="NC_008009.1"/>
</dbReference>
<dbReference type="SMR" id="Q1IHH0"/>
<dbReference type="STRING" id="204669.Acid345_4680"/>
<dbReference type="EnsemblBacteria" id="ABF43680">
    <property type="protein sequence ID" value="ABF43680"/>
    <property type="gene ID" value="Acid345_4680"/>
</dbReference>
<dbReference type="KEGG" id="aba:Acid345_4680"/>
<dbReference type="eggNOG" id="COG0080">
    <property type="taxonomic scope" value="Bacteria"/>
</dbReference>
<dbReference type="HOGENOM" id="CLU_074237_2_1_0"/>
<dbReference type="OrthoDB" id="9802408at2"/>
<dbReference type="Proteomes" id="UP000002432">
    <property type="component" value="Chromosome"/>
</dbReference>
<dbReference type="GO" id="GO:0022625">
    <property type="term" value="C:cytosolic large ribosomal subunit"/>
    <property type="evidence" value="ECO:0007669"/>
    <property type="project" value="TreeGrafter"/>
</dbReference>
<dbReference type="GO" id="GO:0070180">
    <property type="term" value="F:large ribosomal subunit rRNA binding"/>
    <property type="evidence" value="ECO:0007669"/>
    <property type="project" value="UniProtKB-UniRule"/>
</dbReference>
<dbReference type="GO" id="GO:0003735">
    <property type="term" value="F:structural constituent of ribosome"/>
    <property type="evidence" value="ECO:0007669"/>
    <property type="project" value="InterPro"/>
</dbReference>
<dbReference type="GO" id="GO:0006412">
    <property type="term" value="P:translation"/>
    <property type="evidence" value="ECO:0007669"/>
    <property type="project" value="UniProtKB-UniRule"/>
</dbReference>
<dbReference type="CDD" id="cd00349">
    <property type="entry name" value="Ribosomal_L11"/>
    <property type="match status" value="1"/>
</dbReference>
<dbReference type="FunFam" id="1.10.10.250:FF:000001">
    <property type="entry name" value="50S ribosomal protein L11"/>
    <property type="match status" value="1"/>
</dbReference>
<dbReference type="FunFam" id="3.30.1550.10:FF:000001">
    <property type="entry name" value="50S ribosomal protein L11"/>
    <property type="match status" value="1"/>
</dbReference>
<dbReference type="Gene3D" id="1.10.10.250">
    <property type="entry name" value="Ribosomal protein L11, C-terminal domain"/>
    <property type="match status" value="1"/>
</dbReference>
<dbReference type="Gene3D" id="3.30.1550.10">
    <property type="entry name" value="Ribosomal protein L11/L12, N-terminal domain"/>
    <property type="match status" value="1"/>
</dbReference>
<dbReference type="HAMAP" id="MF_00736">
    <property type="entry name" value="Ribosomal_uL11"/>
    <property type="match status" value="1"/>
</dbReference>
<dbReference type="InterPro" id="IPR000911">
    <property type="entry name" value="Ribosomal_uL11"/>
</dbReference>
<dbReference type="InterPro" id="IPR006519">
    <property type="entry name" value="Ribosomal_uL11_bac-typ"/>
</dbReference>
<dbReference type="InterPro" id="IPR020783">
    <property type="entry name" value="Ribosomal_uL11_C"/>
</dbReference>
<dbReference type="InterPro" id="IPR036769">
    <property type="entry name" value="Ribosomal_uL11_C_sf"/>
</dbReference>
<dbReference type="InterPro" id="IPR020784">
    <property type="entry name" value="Ribosomal_uL11_N"/>
</dbReference>
<dbReference type="InterPro" id="IPR036796">
    <property type="entry name" value="Ribosomal_uL11_N_sf"/>
</dbReference>
<dbReference type="NCBIfam" id="TIGR01632">
    <property type="entry name" value="L11_bact"/>
    <property type="match status" value="1"/>
</dbReference>
<dbReference type="PANTHER" id="PTHR11661">
    <property type="entry name" value="60S RIBOSOMAL PROTEIN L12"/>
    <property type="match status" value="1"/>
</dbReference>
<dbReference type="PANTHER" id="PTHR11661:SF1">
    <property type="entry name" value="LARGE RIBOSOMAL SUBUNIT PROTEIN UL11M"/>
    <property type="match status" value="1"/>
</dbReference>
<dbReference type="Pfam" id="PF00298">
    <property type="entry name" value="Ribosomal_L11"/>
    <property type="match status" value="1"/>
</dbReference>
<dbReference type="Pfam" id="PF03946">
    <property type="entry name" value="Ribosomal_L11_N"/>
    <property type="match status" value="1"/>
</dbReference>
<dbReference type="SMART" id="SM00649">
    <property type="entry name" value="RL11"/>
    <property type="match status" value="1"/>
</dbReference>
<dbReference type="SUPFAM" id="SSF54747">
    <property type="entry name" value="Ribosomal L11/L12e N-terminal domain"/>
    <property type="match status" value="1"/>
</dbReference>
<dbReference type="SUPFAM" id="SSF46906">
    <property type="entry name" value="Ribosomal protein L11, C-terminal domain"/>
    <property type="match status" value="1"/>
</dbReference>
<feature type="chain" id="PRO_1000046127" description="Large ribosomal subunit protein uL11">
    <location>
        <begin position="1"/>
        <end position="143"/>
    </location>
</feature>
<keyword id="KW-0488">Methylation</keyword>
<keyword id="KW-1185">Reference proteome</keyword>
<keyword id="KW-0687">Ribonucleoprotein</keyword>
<keyword id="KW-0689">Ribosomal protein</keyword>
<keyword id="KW-0694">RNA-binding</keyword>
<keyword id="KW-0699">rRNA-binding</keyword>
<organism>
    <name type="scientific">Koribacter versatilis (strain Ellin345)</name>
    <dbReference type="NCBI Taxonomy" id="204669"/>
    <lineage>
        <taxon>Bacteria</taxon>
        <taxon>Pseudomonadati</taxon>
        <taxon>Acidobacteriota</taxon>
        <taxon>Terriglobia</taxon>
        <taxon>Terriglobales</taxon>
        <taxon>Candidatus Korobacteraceae</taxon>
        <taxon>Candidatus Korobacter</taxon>
    </lineage>
</organism>
<sequence>MAKKVTGQVKLQIAAGKATPAPPVGPALGQAQINIMEFCKQFNAKTASKDLEGFTIPVVITVYNDRSFTFVTKTPPASDLLRKAAGVAKGSGVPNKDKVGKVTEKQVVEIAKQKMPDLNAASVEAAINSIKGTARSMGIDIVP</sequence>
<reference key="1">
    <citation type="journal article" date="2009" name="Appl. Environ. Microbiol.">
        <title>Three genomes from the phylum Acidobacteria provide insight into the lifestyles of these microorganisms in soils.</title>
        <authorList>
            <person name="Ward N.L."/>
            <person name="Challacombe J.F."/>
            <person name="Janssen P.H."/>
            <person name="Henrissat B."/>
            <person name="Coutinho P.M."/>
            <person name="Wu M."/>
            <person name="Xie G."/>
            <person name="Haft D.H."/>
            <person name="Sait M."/>
            <person name="Badger J."/>
            <person name="Barabote R.D."/>
            <person name="Bradley B."/>
            <person name="Brettin T.S."/>
            <person name="Brinkac L.M."/>
            <person name="Bruce D."/>
            <person name="Creasy T."/>
            <person name="Daugherty S.C."/>
            <person name="Davidsen T.M."/>
            <person name="DeBoy R.T."/>
            <person name="Detter J.C."/>
            <person name="Dodson R.J."/>
            <person name="Durkin A.S."/>
            <person name="Ganapathy A."/>
            <person name="Gwinn-Giglio M."/>
            <person name="Han C.S."/>
            <person name="Khouri H."/>
            <person name="Kiss H."/>
            <person name="Kothari S.P."/>
            <person name="Madupu R."/>
            <person name="Nelson K.E."/>
            <person name="Nelson W.C."/>
            <person name="Paulsen I."/>
            <person name="Penn K."/>
            <person name="Ren Q."/>
            <person name="Rosovitz M.J."/>
            <person name="Selengut J.D."/>
            <person name="Shrivastava S."/>
            <person name="Sullivan S.A."/>
            <person name="Tapia R."/>
            <person name="Thompson L.S."/>
            <person name="Watkins K.L."/>
            <person name="Yang Q."/>
            <person name="Yu C."/>
            <person name="Zafar N."/>
            <person name="Zhou L."/>
            <person name="Kuske C.R."/>
        </authorList>
    </citation>
    <scope>NUCLEOTIDE SEQUENCE [LARGE SCALE GENOMIC DNA]</scope>
    <source>
        <strain>Ellin345</strain>
    </source>
</reference>
<proteinExistence type="inferred from homology"/>
<evidence type="ECO:0000255" key="1">
    <source>
        <dbReference type="HAMAP-Rule" id="MF_00736"/>
    </source>
</evidence>
<evidence type="ECO:0000305" key="2"/>
<comment type="function">
    <text evidence="1">Forms part of the ribosomal stalk which helps the ribosome interact with GTP-bound translation factors.</text>
</comment>
<comment type="subunit">
    <text evidence="1">Part of the ribosomal stalk of the 50S ribosomal subunit. Interacts with L10 and the large rRNA to form the base of the stalk. L10 forms an elongated spine to which L12 dimers bind in a sequential fashion forming a multimeric L10(L12)X complex.</text>
</comment>
<comment type="PTM">
    <text evidence="1">One or more lysine residues are methylated.</text>
</comment>
<comment type="similarity">
    <text evidence="1">Belongs to the universal ribosomal protein uL11 family.</text>
</comment>
<gene>
    <name evidence="1" type="primary">rplK</name>
    <name type="ordered locus">Acid345_4680</name>
</gene>
<name>RL11_KORVE</name>
<protein>
    <recommendedName>
        <fullName evidence="1">Large ribosomal subunit protein uL11</fullName>
    </recommendedName>
    <alternativeName>
        <fullName evidence="2">50S ribosomal protein L11</fullName>
    </alternativeName>
</protein>
<accession>Q1IHH0</accession>